<feature type="chain" id="PRO_0000318254" description="Protein-export protein SecB 1">
    <location>
        <begin position="1"/>
        <end position="155"/>
    </location>
</feature>
<accession>A1VKR9</accession>
<dbReference type="EMBL" id="CP000529">
    <property type="protein sequence ID" value="ABM36247.1"/>
    <property type="molecule type" value="Genomic_DNA"/>
</dbReference>
<dbReference type="RefSeq" id="WP_011800341.1">
    <property type="nucleotide sequence ID" value="NC_008781.1"/>
</dbReference>
<dbReference type="SMR" id="A1VKR9"/>
<dbReference type="STRING" id="365044.Pnap_0930"/>
<dbReference type="KEGG" id="pna:Pnap_0930"/>
<dbReference type="eggNOG" id="COG1952">
    <property type="taxonomic scope" value="Bacteria"/>
</dbReference>
<dbReference type="HOGENOM" id="CLU_111574_1_0_4"/>
<dbReference type="OrthoDB" id="9795145at2"/>
<dbReference type="Proteomes" id="UP000000644">
    <property type="component" value="Chromosome"/>
</dbReference>
<dbReference type="GO" id="GO:0005737">
    <property type="term" value="C:cytoplasm"/>
    <property type="evidence" value="ECO:0007669"/>
    <property type="project" value="UniProtKB-SubCell"/>
</dbReference>
<dbReference type="GO" id="GO:0051082">
    <property type="term" value="F:unfolded protein binding"/>
    <property type="evidence" value="ECO:0007669"/>
    <property type="project" value="InterPro"/>
</dbReference>
<dbReference type="GO" id="GO:0006457">
    <property type="term" value="P:protein folding"/>
    <property type="evidence" value="ECO:0007669"/>
    <property type="project" value="UniProtKB-UniRule"/>
</dbReference>
<dbReference type="GO" id="GO:0051262">
    <property type="term" value="P:protein tetramerization"/>
    <property type="evidence" value="ECO:0007669"/>
    <property type="project" value="InterPro"/>
</dbReference>
<dbReference type="GO" id="GO:0015031">
    <property type="term" value="P:protein transport"/>
    <property type="evidence" value="ECO:0007669"/>
    <property type="project" value="UniProtKB-UniRule"/>
</dbReference>
<dbReference type="Gene3D" id="3.10.420.10">
    <property type="entry name" value="SecB-like"/>
    <property type="match status" value="1"/>
</dbReference>
<dbReference type="HAMAP" id="MF_00821">
    <property type="entry name" value="SecB"/>
    <property type="match status" value="1"/>
</dbReference>
<dbReference type="InterPro" id="IPR003708">
    <property type="entry name" value="SecB"/>
</dbReference>
<dbReference type="InterPro" id="IPR035958">
    <property type="entry name" value="SecB-like_sf"/>
</dbReference>
<dbReference type="NCBIfam" id="NF004394">
    <property type="entry name" value="PRK05751.1-5"/>
    <property type="match status" value="1"/>
</dbReference>
<dbReference type="NCBIfam" id="TIGR00809">
    <property type="entry name" value="secB"/>
    <property type="match status" value="1"/>
</dbReference>
<dbReference type="PANTHER" id="PTHR36918">
    <property type="match status" value="1"/>
</dbReference>
<dbReference type="PANTHER" id="PTHR36918:SF1">
    <property type="entry name" value="PROTEIN-EXPORT PROTEIN SECB"/>
    <property type="match status" value="1"/>
</dbReference>
<dbReference type="Pfam" id="PF02556">
    <property type="entry name" value="SecB"/>
    <property type="match status" value="1"/>
</dbReference>
<dbReference type="PRINTS" id="PR01594">
    <property type="entry name" value="SECBCHAPRONE"/>
</dbReference>
<dbReference type="SUPFAM" id="SSF54611">
    <property type="entry name" value="SecB-like"/>
    <property type="match status" value="1"/>
</dbReference>
<name>SECB1_POLNA</name>
<gene>
    <name evidence="1" type="primary">secB1</name>
    <name type="ordered locus">Pnap_0930</name>
</gene>
<organism>
    <name type="scientific">Polaromonas naphthalenivorans (strain CJ2)</name>
    <dbReference type="NCBI Taxonomy" id="365044"/>
    <lineage>
        <taxon>Bacteria</taxon>
        <taxon>Pseudomonadati</taxon>
        <taxon>Pseudomonadota</taxon>
        <taxon>Betaproteobacteria</taxon>
        <taxon>Burkholderiales</taxon>
        <taxon>Comamonadaceae</taxon>
        <taxon>Polaromonas</taxon>
    </lineage>
</organism>
<reference key="1">
    <citation type="journal article" date="2009" name="Environ. Microbiol.">
        <title>The genome of Polaromonas naphthalenivorans strain CJ2, isolated from coal tar-contaminated sediment, reveals physiological and metabolic versatility and evolution through extensive horizontal gene transfer.</title>
        <authorList>
            <person name="Yagi J.M."/>
            <person name="Sims D."/>
            <person name="Brettin T."/>
            <person name="Bruce D."/>
            <person name="Madsen E.L."/>
        </authorList>
    </citation>
    <scope>NUCLEOTIDE SEQUENCE [LARGE SCALE GENOMIC DNA]</scope>
    <source>
        <strain>CJ2</strain>
    </source>
</reference>
<proteinExistence type="inferred from homology"/>
<comment type="function">
    <text evidence="1">One of the proteins required for the normal export of preproteins out of the cell cytoplasm. It is a molecular chaperone that binds to a subset of precursor proteins, maintaining them in a translocation-competent state. It also specifically binds to its receptor SecA.</text>
</comment>
<comment type="subunit">
    <text evidence="1">Homotetramer, a dimer of dimers. One homotetramer interacts with 1 SecA dimer.</text>
</comment>
<comment type="subcellular location">
    <subcellularLocation>
        <location evidence="1">Cytoplasm</location>
    </subcellularLocation>
</comment>
<comment type="similarity">
    <text evidence="1">Belongs to the SecB family.</text>
</comment>
<keyword id="KW-0143">Chaperone</keyword>
<keyword id="KW-0963">Cytoplasm</keyword>
<keyword id="KW-0653">Protein transport</keyword>
<keyword id="KW-1185">Reference proteome</keyword>
<keyword id="KW-0811">Translocation</keyword>
<keyword id="KW-0813">Transport</keyword>
<sequence length="155" mass="17200">MAEANLDPVFQIQRVYLKDLSLEQPNSPEILLNQEQPGVEIQLGVDAKPVAEGLFEITVTATVHTKIEEKTVFMVEAKQAGIFEIRNIQSDQMGALLGIACPQIVYPYLRSNVADIIQRGGFPPVHMAEINFQAMYEQQQAEAMMATSEAPQILV</sequence>
<evidence type="ECO:0000255" key="1">
    <source>
        <dbReference type="HAMAP-Rule" id="MF_00821"/>
    </source>
</evidence>
<protein>
    <recommendedName>
        <fullName evidence="1">Protein-export protein SecB 1</fullName>
    </recommendedName>
</protein>